<feature type="initiator methionine" description="Removed" evidence="1">
    <location>
        <position position="1"/>
    </location>
</feature>
<feature type="chain" id="PRO_0000085838" description="Calcium-dependent protein kinase 2">
    <location>
        <begin position="2"/>
        <end position="513"/>
    </location>
</feature>
<feature type="domain" description="Protein kinase" evidence="4">
    <location>
        <begin position="72"/>
        <end position="326"/>
    </location>
</feature>
<feature type="domain" description="EF-hand 1" evidence="5">
    <location>
        <begin position="370"/>
        <end position="405"/>
    </location>
</feature>
<feature type="domain" description="EF-hand 2" evidence="5">
    <location>
        <begin position="406"/>
        <end position="441"/>
    </location>
</feature>
<feature type="domain" description="EF-hand 3" evidence="5">
    <location>
        <begin position="442"/>
        <end position="477"/>
    </location>
</feature>
<feature type="domain" description="EF-hand 4" evidence="5">
    <location>
        <begin position="480"/>
        <end position="513"/>
    </location>
</feature>
<feature type="region of interest" description="J domain" evidence="2">
    <location>
        <begin position="345"/>
        <end position="380"/>
    </location>
</feature>
<feature type="short sequence motif" description="J domain autoinhibitory motif" evidence="2">
    <location>
        <begin position="345"/>
        <end position="353"/>
    </location>
</feature>
<feature type="short sequence motif" description="J domain EF-hand interaction motif" evidence="2">
    <location>
        <begin position="354"/>
        <end position="363"/>
    </location>
</feature>
<feature type="active site" description="Proton acceptor" evidence="4 6">
    <location>
        <position position="192"/>
    </location>
</feature>
<feature type="binding site" evidence="4">
    <location>
        <begin position="78"/>
        <end position="86"/>
    </location>
    <ligand>
        <name>ATP</name>
        <dbReference type="ChEBI" id="CHEBI:30616"/>
    </ligand>
</feature>
<feature type="binding site" evidence="4">
    <location>
        <position position="101"/>
    </location>
    <ligand>
        <name>ATP</name>
        <dbReference type="ChEBI" id="CHEBI:30616"/>
    </ligand>
</feature>
<feature type="binding site" evidence="5 8 9 13 14">
    <location>
        <position position="383"/>
    </location>
    <ligand>
        <name>Ca(2+)</name>
        <dbReference type="ChEBI" id="CHEBI:29108"/>
        <label>1</label>
    </ligand>
</feature>
<feature type="binding site" evidence="5 8 9 13 14">
    <location>
        <position position="385"/>
    </location>
    <ligand>
        <name>Ca(2+)</name>
        <dbReference type="ChEBI" id="CHEBI:29108"/>
        <label>1</label>
    </ligand>
</feature>
<feature type="binding site" evidence="5 8 9 13 14">
    <location>
        <position position="387"/>
    </location>
    <ligand>
        <name>Ca(2+)</name>
        <dbReference type="ChEBI" id="CHEBI:29108"/>
        <label>1</label>
    </ligand>
</feature>
<feature type="binding site" evidence="5 8 9 13 14">
    <location>
        <position position="389"/>
    </location>
    <ligand>
        <name>Ca(2+)</name>
        <dbReference type="ChEBI" id="CHEBI:29108"/>
        <label>1</label>
    </ligand>
</feature>
<feature type="binding site" evidence="5 8 9 13 14">
    <location>
        <position position="394"/>
    </location>
    <ligand>
        <name>Ca(2+)</name>
        <dbReference type="ChEBI" id="CHEBI:29108"/>
        <label>1</label>
    </ligand>
</feature>
<feature type="binding site" evidence="5 9 14">
    <location>
        <position position="455"/>
    </location>
    <ligand>
        <name>Ca(2+)</name>
        <dbReference type="ChEBI" id="CHEBI:29108"/>
        <label>2</label>
    </ligand>
</feature>
<feature type="binding site" evidence="5 9 14">
    <location>
        <position position="457"/>
    </location>
    <ligand>
        <name>Ca(2+)</name>
        <dbReference type="ChEBI" id="CHEBI:29108"/>
        <label>2</label>
    </ligand>
</feature>
<feature type="binding site" evidence="5 9 14">
    <location>
        <position position="459"/>
    </location>
    <ligand>
        <name>Ca(2+)</name>
        <dbReference type="ChEBI" id="CHEBI:29108"/>
        <label>2</label>
    </ligand>
</feature>
<feature type="binding site" evidence="5 9 14">
    <location>
        <position position="461"/>
    </location>
    <ligand>
        <name>Ca(2+)</name>
        <dbReference type="ChEBI" id="CHEBI:29108"/>
        <label>2</label>
    </ligand>
</feature>
<feature type="binding site" evidence="5 9 14">
    <location>
        <position position="466"/>
    </location>
    <ligand>
        <name>Ca(2+)</name>
        <dbReference type="ChEBI" id="CHEBI:29108"/>
        <label>2</label>
    </ligand>
</feature>
<feature type="binding site" evidence="5 8 9 13 14">
    <location>
        <position position="493"/>
    </location>
    <ligand>
        <name>Ca(2+)</name>
        <dbReference type="ChEBI" id="CHEBI:29108"/>
        <label>3</label>
    </ligand>
</feature>
<feature type="binding site" evidence="5 8 9 13 14">
    <location>
        <position position="495"/>
    </location>
    <ligand>
        <name>Ca(2+)</name>
        <dbReference type="ChEBI" id="CHEBI:29108"/>
        <label>3</label>
    </ligand>
</feature>
<feature type="binding site" evidence="5 8 9 13 14">
    <location>
        <position position="497"/>
    </location>
    <ligand>
        <name>Ca(2+)</name>
        <dbReference type="ChEBI" id="CHEBI:29108"/>
        <label>3</label>
    </ligand>
</feature>
<feature type="binding site" evidence="5 8 9 13 14">
    <location>
        <position position="499"/>
    </location>
    <ligand>
        <name>Ca(2+)</name>
        <dbReference type="ChEBI" id="CHEBI:29108"/>
        <label>3</label>
    </ligand>
</feature>
<feature type="binding site" evidence="5 8 9 13 14">
    <location>
        <position position="504"/>
    </location>
    <ligand>
        <name>Ca(2+)</name>
        <dbReference type="ChEBI" id="CHEBI:29108"/>
        <label>3</label>
    </ligand>
</feature>
<feature type="lipid moiety-binding region" description="N-myristoyl glycine" evidence="1">
    <location>
        <position position="2"/>
    </location>
</feature>
<feature type="strand" evidence="16">
    <location>
        <begin position="62"/>
        <end position="64"/>
    </location>
</feature>
<feature type="helix" evidence="16">
    <location>
        <begin position="68"/>
        <end position="71"/>
    </location>
</feature>
<feature type="strand" evidence="16">
    <location>
        <begin position="72"/>
        <end position="80"/>
    </location>
</feature>
<feature type="strand" evidence="16">
    <location>
        <begin position="82"/>
        <end position="91"/>
    </location>
</feature>
<feature type="turn" evidence="16">
    <location>
        <begin position="92"/>
        <end position="94"/>
    </location>
</feature>
<feature type="strand" evidence="16">
    <location>
        <begin position="97"/>
        <end position="104"/>
    </location>
</feature>
<feature type="helix" evidence="16">
    <location>
        <begin position="108"/>
        <end position="121"/>
    </location>
</feature>
<feature type="strand" evidence="16">
    <location>
        <begin position="132"/>
        <end position="137"/>
    </location>
</feature>
<feature type="strand" evidence="16">
    <location>
        <begin position="139"/>
        <end position="147"/>
    </location>
</feature>
<feature type="helix" evidence="16">
    <location>
        <begin position="156"/>
        <end position="161"/>
    </location>
</feature>
<feature type="helix" evidence="16">
    <location>
        <begin position="166"/>
        <end position="185"/>
    </location>
</feature>
<feature type="helix" evidence="16">
    <location>
        <begin position="195"/>
        <end position="197"/>
    </location>
</feature>
<feature type="strand" evidence="16">
    <location>
        <begin position="198"/>
        <end position="204"/>
    </location>
</feature>
<feature type="strand" evidence="16">
    <location>
        <begin position="209"/>
        <end position="211"/>
    </location>
</feature>
<feature type="helix" evidence="16">
    <location>
        <begin position="245"/>
        <end position="263"/>
    </location>
</feature>
<feature type="turn" evidence="16">
    <location>
        <begin position="290"/>
        <end position="294"/>
    </location>
</feature>
<feature type="helix" evidence="16">
    <location>
        <begin position="297"/>
        <end position="306"/>
    </location>
</feature>
<feature type="helix" evidence="16">
    <location>
        <begin position="311"/>
        <end position="313"/>
    </location>
</feature>
<feature type="helix" evidence="16">
    <location>
        <begin position="317"/>
        <end position="321"/>
    </location>
</feature>
<feature type="helix" evidence="16">
    <location>
        <begin position="324"/>
        <end position="329"/>
    </location>
</feature>
<feature type="helix" evidence="15">
    <location>
        <begin position="342"/>
        <end position="348"/>
    </location>
</feature>
<feature type="turn" evidence="15">
    <location>
        <begin position="349"/>
        <end position="351"/>
    </location>
</feature>
<feature type="helix" evidence="15">
    <location>
        <begin position="354"/>
        <end position="366"/>
    </location>
</feature>
<feature type="helix" evidence="15">
    <location>
        <begin position="369"/>
        <end position="382"/>
    </location>
</feature>
<feature type="strand" evidence="15">
    <location>
        <begin position="387"/>
        <end position="390"/>
    </location>
</feature>
<feature type="helix" evidence="15">
    <location>
        <begin position="392"/>
        <end position="402"/>
    </location>
</feature>
<feature type="helix" evidence="15">
    <location>
        <begin position="409"/>
        <end position="416"/>
    </location>
</feature>
<feature type="strand" evidence="16">
    <location>
        <begin position="421"/>
        <end position="427"/>
    </location>
</feature>
<feature type="helix" evidence="15">
    <location>
        <begin position="428"/>
        <end position="433"/>
    </location>
</feature>
<feature type="helix" evidence="15">
    <location>
        <begin position="438"/>
        <end position="441"/>
    </location>
</feature>
<feature type="helix" evidence="15">
    <location>
        <begin position="444"/>
        <end position="454"/>
    </location>
</feature>
<feature type="strand" evidence="15">
    <location>
        <begin position="459"/>
        <end position="462"/>
    </location>
</feature>
<feature type="helix" evidence="15">
    <location>
        <begin position="464"/>
        <end position="471"/>
    </location>
</feature>
<feature type="helix" evidence="15">
    <location>
        <begin position="479"/>
        <end position="492"/>
    </location>
</feature>
<feature type="strand" evidence="15">
    <location>
        <begin position="497"/>
        <end position="501"/>
    </location>
</feature>
<feature type="helix" evidence="15">
    <location>
        <begin position="502"/>
        <end position="510"/>
    </location>
</feature>
<keyword id="KW-0002">3D-structure</keyword>
<keyword id="KW-0067">ATP-binding</keyword>
<keyword id="KW-0106">Calcium</keyword>
<keyword id="KW-0418">Kinase</keyword>
<keyword id="KW-0449">Lipoprotein</keyword>
<keyword id="KW-0460">Magnesium</keyword>
<keyword id="KW-0479">Metal-binding</keyword>
<keyword id="KW-0519">Myristate</keyword>
<keyword id="KW-0547">Nucleotide-binding</keyword>
<keyword id="KW-0597">Phosphoprotein</keyword>
<keyword id="KW-0677">Repeat</keyword>
<keyword id="KW-0723">Serine/threonine-protein kinase</keyword>
<keyword id="KW-0808">Transferase</keyword>
<proteinExistence type="evidence at protein level"/>
<reference key="1">
    <citation type="journal article" date="1997" name="Mol. Biochem. Parasitol.">
        <title>Molecular cloning and characterization of a second calcium-dependent protein kinase of Plasmodium falciparum.</title>
        <authorList>
            <person name="Faerber P.M."/>
            <person name="Graeser R."/>
            <person name="Franklin R.M."/>
            <person name="Kappes R."/>
        </authorList>
    </citation>
    <scope>NUCLEOTIDE SEQUENCE [GENOMIC DNA]</scope>
    <scope>FUNCTION</scope>
    <scope>CATALYTIC ACTIVITY</scope>
    <scope>ACTIVITY REGULATION</scope>
    <scope>DEVELOPMENTAL STAGE</scope>
    <scope>PHOSPHORYLATION</scope>
</reference>
<reference evidence="13" key="2">
    <citation type="submission" date="2010-11" db="PDB data bank">
        <title>CAD domain of PFF0520w, Calcium dependent protein kinase.</title>
        <authorList>
            <person name="Wernimont A.K."/>
            <person name="Hutchinson A."/>
            <person name="Lew J."/>
            <person name="Chamberlain K."/>
            <person name="MacKenzie F."/>
            <person name="Loppnau P."/>
            <person name="Cossar D."/>
            <person name="Crombet L."/>
            <person name="Arrowsmith C.H."/>
            <person name="Edwards A.M."/>
            <person name="Bountra C."/>
            <person name="Weigelt J."/>
            <person name="Hui R."/>
            <person name="Amani M."/>
        </authorList>
    </citation>
    <scope>X-RAY CRYSTALLOGRAPHY (2.00 ANGSTROMS) OF 335-513 IN COMPLEX WITH CALCIUM</scope>
</reference>
<reference evidence="14" key="3">
    <citation type="submission" date="2013-09" db="PDB data bank">
        <title>P. falciparum Calcium-Dependent Protein Kinase 2 (PfCDPK2): First Crystal Structure and Virtual Ligand Screening.</title>
        <authorList>
            <person name="Lauciello L."/>
            <person name="Pernot L."/>
            <person name="Bottegoni G."/>
            <person name="Bisson W."/>
            <person name="Scapozza L."/>
            <person name="Perozzo R."/>
        </authorList>
    </citation>
    <scope>X-RAY CRYSTALLOGRAPHY (2.00 ANGSTROMS) OF 30-511 IN COMPLEX WITH CALCIUM</scope>
</reference>
<protein>
    <recommendedName>
        <fullName evidence="10">Calcium-dependent protein kinase 2</fullName>
        <ecNumber evidence="7">2.7.11.1</ecNumber>
    </recommendedName>
    <alternativeName>
        <fullName evidence="10">PfCDPK2</fullName>
    </alternativeName>
</protein>
<name>CDPK2_PLAFK</name>
<accession>O15865</accession>
<evidence type="ECO:0000250" key="1">
    <source>
        <dbReference type="UniProtKB" id="P62344"/>
    </source>
</evidence>
<evidence type="ECO:0000250" key="2">
    <source>
        <dbReference type="UniProtKB" id="Q8IBS5"/>
    </source>
</evidence>
<evidence type="ECO:0000250" key="3">
    <source>
        <dbReference type="UniProtKB" id="Q8ICR0"/>
    </source>
</evidence>
<evidence type="ECO:0000255" key="4">
    <source>
        <dbReference type="PROSITE-ProRule" id="PRU00159"/>
    </source>
</evidence>
<evidence type="ECO:0000255" key="5">
    <source>
        <dbReference type="PROSITE-ProRule" id="PRU00448"/>
    </source>
</evidence>
<evidence type="ECO:0000255" key="6">
    <source>
        <dbReference type="PROSITE-ProRule" id="PRU10027"/>
    </source>
</evidence>
<evidence type="ECO:0000269" key="7">
    <source>
    </source>
</evidence>
<evidence type="ECO:0000269" key="8">
    <source ref="2"/>
</evidence>
<evidence type="ECO:0000269" key="9">
    <source ref="3"/>
</evidence>
<evidence type="ECO:0000303" key="10">
    <source>
    </source>
</evidence>
<evidence type="ECO:0000305" key="11">
    <source ref="2"/>
</evidence>
<evidence type="ECO:0000305" key="12">
    <source ref="3"/>
</evidence>
<evidence type="ECO:0007744" key="13">
    <source>
        <dbReference type="PDB" id="3PM8"/>
    </source>
</evidence>
<evidence type="ECO:0007744" key="14">
    <source>
        <dbReference type="PDB" id="4MVF"/>
    </source>
</evidence>
<evidence type="ECO:0007829" key="15">
    <source>
        <dbReference type="PDB" id="3PM8"/>
    </source>
</evidence>
<evidence type="ECO:0007829" key="16">
    <source>
        <dbReference type="PDB" id="4MVF"/>
    </source>
</evidence>
<dbReference type="EC" id="2.7.11.1" evidence="7"/>
<dbReference type="EMBL" id="X99763">
    <property type="protein sequence ID" value="CAA68090.1"/>
    <property type="molecule type" value="Genomic_DNA"/>
</dbReference>
<dbReference type="PDB" id="3PM8">
    <property type="method" value="X-ray"/>
    <property type="resolution" value="2.00 A"/>
    <property type="chains" value="A/B=335-513"/>
</dbReference>
<dbReference type="PDB" id="4MVF">
    <property type="method" value="X-ray"/>
    <property type="resolution" value="2.00 A"/>
    <property type="chains" value="A=30-511"/>
</dbReference>
<dbReference type="PDBsum" id="3PM8"/>
<dbReference type="PDBsum" id="4MVF"/>
<dbReference type="SMR" id="O15865"/>
<dbReference type="EvolutionaryTrace" id="O15865"/>
<dbReference type="GO" id="GO:0005524">
    <property type="term" value="F:ATP binding"/>
    <property type="evidence" value="ECO:0007669"/>
    <property type="project" value="UniProtKB-KW"/>
</dbReference>
<dbReference type="GO" id="GO:0005509">
    <property type="term" value="F:calcium ion binding"/>
    <property type="evidence" value="ECO:0007669"/>
    <property type="project" value="InterPro"/>
</dbReference>
<dbReference type="GO" id="GO:0009931">
    <property type="term" value="F:calcium-dependent protein serine/threonine kinase activity"/>
    <property type="evidence" value="ECO:0007669"/>
    <property type="project" value="UniProtKB-ARBA"/>
</dbReference>
<dbReference type="GO" id="GO:0106310">
    <property type="term" value="F:protein serine kinase activity"/>
    <property type="evidence" value="ECO:0007669"/>
    <property type="project" value="RHEA"/>
</dbReference>
<dbReference type="CDD" id="cd00051">
    <property type="entry name" value="EFh"/>
    <property type="match status" value="1"/>
</dbReference>
<dbReference type="CDD" id="cd05117">
    <property type="entry name" value="STKc_CAMK"/>
    <property type="match status" value="1"/>
</dbReference>
<dbReference type="FunFam" id="3.30.200.20:FF:000315">
    <property type="entry name" value="Calcium-dependent protein kinase 3"/>
    <property type="match status" value="1"/>
</dbReference>
<dbReference type="FunFam" id="1.10.510.10:FF:000475">
    <property type="entry name" value="Calcium-dependent protein kinase 5"/>
    <property type="match status" value="1"/>
</dbReference>
<dbReference type="FunFam" id="1.10.238.10:FF:000003">
    <property type="entry name" value="Calmodulin A"/>
    <property type="match status" value="1"/>
</dbReference>
<dbReference type="Gene3D" id="1.10.238.10">
    <property type="entry name" value="EF-hand"/>
    <property type="match status" value="2"/>
</dbReference>
<dbReference type="Gene3D" id="3.30.200.20">
    <property type="entry name" value="Phosphorylase Kinase, domain 1"/>
    <property type="match status" value="1"/>
</dbReference>
<dbReference type="Gene3D" id="1.10.510.10">
    <property type="entry name" value="Transferase(Phosphotransferase) domain 1"/>
    <property type="match status" value="1"/>
</dbReference>
<dbReference type="InterPro" id="IPR050205">
    <property type="entry name" value="CDPK_Ser/Thr_kinases"/>
</dbReference>
<dbReference type="InterPro" id="IPR011992">
    <property type="entry name" value="EF-hand-dom_pair"/>
</dbReference>
<dbReference type="InterPro" id="IPR018247">
    <property type="entry name" value="EF_Hand_1_Ca_BS"/>
</dbReference>
<dbReference type="InterPro" id="IPR002048">
    <property type="entry name" value="EF_hand_dom"/>
</dbReference>
<dbReference type="InterPro" id="IPR011009">
    <property type="entry name" value="Kinase-like_dom_sf"/>
</dbReference>
<dbReference type="InterPro" id="IPR000719">
    <property type="entry name" value="Prot_kinase_dom"/>
</dbReference>
<dbReference type="InterPro" id="IPR017441">
    <property type="entry name" value="Protein_kinase_ATP_BS"/>
</dbReference>
<dbReference type="InterPro" id="IPR008271">
    <property type="entry name" value="Ser/Thr_kinase_AS"/>
</dbReference>
<dbReference type="PANTHER" id="PTHR24349">
    <property type="entry name" value="SERINE/THREONINE-PROTEIN KINASE"/>
    <property type="match status" value="1"/>
</dbReference>
<dbReference type="Pfam" id="PF13499">
    <property type="entry name" value="EF-hand_7"/>
    <property type="match status" value="2"/>
</dbReference>
<dbReference type="Pfam" id="PF00069">
    <property type="entry name" value="Pkinase"/>
    <property type="match status" value="1"/>
</dbReference>
<dbReference type="SMART" id="SM00054">
    <property type="entry name" value="EFh"/>
    <property type="match status" value="4"/>
</dbReference>
<dbReference type="SMART" id="SM00220">
    <property type="entry name" value="S_TKc"/>
    <property type="match status" value="1"/>
</dbReference>
<dbReference type="SUPFAM" id="SSF47473">
    <property type="entry name" value="EF-hand"/>
    <property type="match status" value="1"/>
</dbReference>
<dbReference type="SUPFAM" id="SSF56112">
    <property type="entry name" value="Protein kinase-like (PK-like)"/>
    <property type="match status" value="1"/>
</dbReference>
<dbReference type="PROSITE" id="PS00018">
    <property type="entry name" value="EF_HAND_1"/>
    <property type="match status" value="3"/>
</dbReference>
<dbReference type="PROSITE" id="PS50222">
    <property type="entry name" value="EF_HAND_2"/>
    <property type="match status" value="4"/>
</dbReference>
<dbReference type="PROSITE" id="PS00107">
    <property type="entry name" value="PROTEIN_KINASE_ATP"/>
    <property type="match status" value="1"/>
</dbReference>
<dbReference type="PROSITE" id="PS50011">
    <property type="entry name" value="PROTEIN_KINASE_DOM"/>
    <property type="match status" value="1"/>
</dbReference>
<dbReference type="PROSITE" id="PS00108">
    <property type="entry name" value="PROTEIN_KINASE_ST"/>
    <property type="match status" value="1"/>
</dbReference>
<organism>
    <name type="scientific">Plasmodium falciparum (isolate K1 / Thailand)</name>
    <dbReference type="NCBI Taxonomy" id="5839"/>
    <lineage>
        <taxon>Eukaryota</taxon>
        <taxon>Sar</taxon>
        <taxon>Alveolata</taxon>
        <taxon>Apicomplexa</taxon>
        <taxon>Aconoidasida</taxon>
        <taxon>Haemosporida</taxon>
        <taxon>Plasmodiidae</taxon>
        <taxon>Plasmodium</taxon>
        <taxon>Plasmodium (Laverania)</taxon>
    </lineage>
</organism>
<sequence>MGNHLSVNKLKRKKKKKSFLNIYGKNTNENTSKQSNDYKYDINTSCISREGTTTLERKNLILCHSGKLEDKYIIDEKLGQGTYGCVYKGIDKVTNQLYAIKEEKKDRLKNINRFFQEIEIMKKLDHPNIVKLYETYENDNYIYLIMELCSGRELFDSIIENGSFTEKNAATIMKQIFSAIFYLHSLNIVHRDLKPENFLFQSENKDSLLKIIDFGLSKNLGTGEFTTTKAGTPYYVAPQVLDGKYDKKCDIWSSGVIMYTLLCGYPPFYGDTDNEVLKKVKKGEFCFYENDWGSISSDAKNLITKLLTYNPNERCTIEEALNHPWITQMTKSHEHVELSSTLLKNLKNFKKENELKKIALTIIAKHLCDVEINNLRNIFIALDVDNSGTLSSQEILDGLKKIGYQKIPPDIHQVLRDIDSNASGQIHYTDFLAATIDKQTYLKKEVCLIPFKFFDIDGNGKISVEELKRIFGRDDIENPLIDKAIDSLLQEVDLNGDGEIDFHEFMLMMSKKK</sequence>
<comment type="function">
    <text evidence="3 7">Calcium-dependent protein kinase which acts as a sensor and effector of intracellular Ca(2+) levels probably in part downstream of cGMP-activated PKG kinase (PubMed:9247932). During male gametogenesis in the mosquito gut, required for male exflagellation, possibly by regulating male gamete exit from the host erythrocytes. Not required for asexual blood stage proliferation (By similarity).</text>
</comment>
<comment type="catalytic activity">
    <reaction evidence="7">
        <text>L-seryl-[protein] + ATP = O-phospho-L-seryl-[protein] + ADP + H(+)</text>
        <dbReference type="Rhea" id="RHEA:17989"/>
        <dbReference type="Rhea" id="RHEA-COMP:9863"/>
        <dbReference type="Rhea" id="RHEA-COMP:11604"/>
        <dbReference type="ChEBI" id="CHEBI:15378"/>
        <dbReference type="ChEBI" id="CHEBI:29999"/>
        <dbReference type="ChEBI" id="CHEBI:30616"/>
        <dbReference type="ChEBI" id="CHEBI:83421"/>
        <dbReference type="ChEBI" id="CHEBI:456216"/>
        <dbReference type="EC" id="2.7.11.1"/>
    </reaction>
</comment>
<comment type="catalytic activity">
    <reaction evidence="7">
        <text>L-threonyl-[protein] + ATP = O-phospho-L-threonyl-[protein] + ADP + H(+)</text>
        <dbReference type="Rhea" id="RHEA:46608"/>
        <dbReference type="Rhea" id="RHEA-COMP:11060"/>
        <dbReference type="Rhea" id="RHEA-COMP:11605"/>
        <dbReference type="ChEBI" id="CHEBI:15378"/>
        <dbReference type="ChEBI" id="CHEBI:30013"/>
        <dbReference type="ChEBI" id="CHEBI:30616"/>
        <dbReference type="ChEBI" id="CHEBI:61977"/>
        <dbReference type="ChEBI" id="CHEBI:456216"/>
        <dbReference type="EC" id="2.7.11.1"/>
    </reaction>
</comment>
<comment type="cofactor">
    <cofactor evidence="3">
        <name>Mg(2+)</name>
        <dbReference type="ChEBI" id="CHEBI:18420"/>
    </cofactor>
</comment>
<comment type="activity regulation">
    <text evidence="2 7">Activated by calcium (PubMed:9247932). Upon calcium binding to the EF-hand domains, the C-terminus of the junction domain (J domain) undergoes a conformational change which results in the dissociation of the pseudo-substrate inhibitory motif from the catalytic domain. This, in turn, may facilitate the autophosphorylation of the activation loop at Thr-232, which leads to the kinase activation (By similarity).</text>
</comment>
<comment type="subunit">
    <text evidence="3">Monomer.</text>
</comment>
<comment type="developmental stage">
    <text evidence="7">Expressed in ring, trophozoite, schizont and segmenter stages.</text>
</comment>
<comment type="domain">
    <text evidence="11 12">The EF-hand domain 2 appears to lack a functional calcium binding site.</text>
</comment>
<comment type="domain">
    <text evidence="2">The junction domain (J domain) is composed of 2 motifs that maintain the kinase inactive. The N-terminal autoinhibitory motif acts as a pseudosubstrate inhibiting the catalytic domain while the C-terminal motif binds the EF-hand domains.</text>
</comment>
<comment type="PTM">
    <text evidence="1">Myristoylated; myristoylation may target it to different subcellular compartments.</text>
</comment>
<comment type="PTM">
    <text evidence="7">Autophosphorylated in vitro.</text>
</comment>
<comment type="similarity">
    <text evidence="4">Belongs to the protein kinase superfamily. Ser/Thr protein kinase family. CDPK subfamily.</text>
</comment>
<gene>
    <name evidence="10" type="primary">CDPK2</name>
    <name type="synonym">CPK2</name>
</gene>